<evidence type="ECO:0000250" key="1"/>
<evidence type="ECO:0000255" key="2">
    <source>
        <dbReference type="PROSITE-ProRule" id="PRU00159"/>
    </source>
</evidence>
<evidence type="ECO:0000255" key="3">
    <source>
        <dbReference type="PROSITE-ProRule" id="PRU10027"/>
    </source>
</evidence>
<evidence type="ECO:0000305" key="4"/>
<sequence>MSSSQFKQLEKLGNGTYATVYKGLNKSTGVYVALKEVKLDSEEGTPSTAIREISLMKELKHDNIVRLYDVIHTENKLTLVFEYMDNDLKKYMDSRTVGNAPRGLEMNLVKYFQWQLLEGLAFCHENKILHRDLKPQNLLITKRGQLKLGDFGLARAFGIPVNTFSSEVVTLWYRAPDVLMGSRTYSTSIDIWSCGCILAEMITGKPLFPGTNDEEQLKLIFDKMGTPNETTWPGVTSLPKYNPNFQQRLPKDLKAELQPYVKEPLDDNVIDLLHGLLQLNPDMRLSAKQALLHPWFSEYYES</sequence>
<organism>
    <name type="scientific">Candida glabrata (strain ATCC 2001 / BCRC 20586 / JCM 3761 / NBRC 0622 / NRRL Y-65 / CBS 138)</name>
    <name type="common">Yeast</name>
    <name type="synonym">Nakaseomyces glabratus</name>
    <dbReference type="NCBI Taxonomy" id="284593"/>
    <lineage>
        <taxon>Eukaryota</taxon>
        <taxon>Fungi</taxon>
        <taxon>Dikarya</taxon>
        <taxon>Ascomycota</taxon>
        <taxon>Saccharomycotina</taxon>
        <taxon>Saccharomycetes</taxon>
        <taxon>Saccharomycetales</taxon>
        <taxon>Saccharomycetaceae</taxon>
        <taxon>Nakaseomyces</taxon>
    </lineage>
</organism>
<comment type="function">
    <text evidence="1">When phosphate concentrations are high it phosphorylates the PHO4 transcription factor thus establishing repression.</text>
</comment>
<comment type="catalytic activity">
    <reaction>
        <text>L-seryl-[protein] + ATP = O-phospho-L-seryl-[protein] + ADP + H(+)</text>
        <dbReference type="Rhea" id="RHEA:17989"/>
        <dbReference type="Rhea" id="RHEA-COMP:9863"/>
        <dbReference type="Rhea" id="RHEA-COMP:11604"/>
        <dbReference type="ChEBI" id="CHEBI:15378"/>
        <dbReference type="ChEBI" id="CHEBI:29999"/>
        <dbReference type="ChEBI" id="CHEBI:30616"/>
        <dbReference type="ChEBI" id="CHEBI:83421"/>
        <dbReference type="ChEBI" id="CHEBI:456216"/>
        <dbReference type="EC" id="2.7.11.22"/>
    </reaction>
</comment>
<comment type="catalytic activity">
    <reaction>
        <text>L-threonyl-[protein] + ATP = O-phospho-L-threonyl-[protein] + ADP + H(+)</text>
        <dbReference type="Rhea" id="RHEA:46608"/>
        <dbReference type="Rhea" id="RHEA-COMP:11060"/>
        <dbReference type="Rhea" id="RHEA-COMP:11605"/>
        <dbReference type="ChEBI" id="CHEBI:15378"/>
        <dbReference type="ChEBI" id="CHEBI:30013"/>
        <dbReference type="ChEBI" id="CHEBI:30616"/>
        <dbReference type="ChEBI" id="CHEBI:61977"/>
        <dbReference type="ChEBI" id="CHEBI:456216"/>
        <dbReference type="EC" id="2.7.11.22"/>
    </reaction>
</comment>
<comment type="subunit">
    <text evidence="1">Interacts with a number of cyclins.</text>
</comment>
<comment type="similarity">
    <text evidence="4">Belongs to the protein kinase superfamily. CMGC Ser/Thr protein kinase family. CDC2/CDKX subfamily.</text>
</comment>
<feature type="chain" id="PRO_0000086517" description="Negative regulator of the PHO system">
    <location>
        <begin position="1"/>
        <end position="302"/>
    </location>
</feature>
<feature type="domain" description="Protein kinase" evidence="2">
    <location>
        <begin position="6"/>
        <end position="296"/>
    </location>
</feature>
<feature type="active site" description="Proton acceptor" evidence="2 3">
    <location>
        <position position="132"/>
    </location>
</feature>
<feature type="binding site" evidence="2">
    <location>
        <begin position="12"/>
        <end position="20"/>
    </location>
    <ligand>
        <name>ATP</name>
        <dbReference type="ChEBI" id="CHEBI:30616"/>
    </ligand>
</feature>
<feature type="binding site" evidence="2">
    <location>
        <position position="35"/>
    </location>
    <ligand>
        <name>ATP</name>
        <dbReference type="ChEBI" id="CHEBI:30616"/>
    </ligand>
</feature>
<dbReference type="EC" id="2.7.11.22"/>
<dbReference type="EMBL" id="CR380958">
    <property type="protein sequence ID" value="CAG62284.1"/>
    <property type="molecule type" value="Genomic_DNA"/>
</dbReference>
<dbReference type="RefSeq" id="XP_449310.1">
    <property type="nucleotide sequence ID" value="XM_449310.1"/>
</dbReference>
<dbReference type="SMR" id="Q6FKD4"/>
<dbReference type="FunCoup" id="Q6FKD4">
    <property type="interactions" value="584"/>
</dbReference>
<dbReference type="STRING" id="284593.Q6FKD4"/>
<dbReference type="EnsemblFungi" id="CAGL0L12474g-T">
    <property type="protein sequence ID" value="CAGL0L12474g-T-p1"/>
    <property type="gene ID" value="CAGL0L12474g"/>
</dbReference>
<dbReference type="GeneID" id="2890701"/>
<dbReference type="KEGG" id="cgr:2890701"/>
<dbReference type="CGD" id="CAL0135842">
    <property type="gene designation" value="PHO85"/>
</dbReference>
<dbReference type="VEuPathDB" id="FungiDB:B1J91_L12474g"/>
<dbReference type="VEuPathDB" id="FungiDB:CAGL0L12474g"/>
<dbReference type="eggNOG" id="KOG0594">
    <property type="taxonomic scope" value="Eukaryota"/>
</dbReference>
<dbReference type="HOGENOM" id="CLU_000288_181_1_1"/>
<dbReference type="InParanoid" id="Q6FKD4"/>
<dbReference type="OMA" id="NWQIFVP"/>
<dbReference type="Proteomes" id="UP000002428">
    <property type="component" value="Chromosome L"/>
</dbReference>
<dbReference type="GO" id="GO:0005935">
    <property type="term" value="C:cellular bud neck"/>
    <property type="evidence" value="ECO:0007669"/>
    <property type="project" value="EnsemblFungi"/>
</dbReference>
<dbReference type="GO" id="GO:0005737">
    <property type="term" value="C:cytoplasm"/>
    <property type="evidence" value="ECO:0007669"/>
    <property type="project" value="TreeGrafter"/>
</dbReference>
<dbReference type="GO" id="GO:0005634">
    <property type="term" value="C:nucleus"/>
    <property type="evidence" value="ECO:0007669"/>
    <property type="project" value="EnsemblFungi"/>
</dbReference>
<dbReference type="GO" id="GO:1990860">
    <property type="term" value="C:Pho85-Pho80 CDK-cyclin complex"/>
    <property type="evidence" value="ECO:0007669"/>
    <property type="project" value="EnsemblFungi"/>
</dbReference>
<dbReference type="GO" id="GO:0005524">
    <property type="term" value="F:ATP binding"/>
    <property type="evidence" value="ECO:0007669"/>
    <property type="project" value="UniProtKB-KW"/>
</dbReference>
<dbReference type="GO" id="GO:0004693">
    <property type="term" value="F:cyclin-dependent protein serine/threonine kinase activity"/>
    <property type="evidence" value="ECO:0007669"/>
    <property type="project" value="UniProtKB-EC"/>
</dbReference>
<dbReference type="GO" id="GO:0106310">
    <property type="term" value="F:protein serine kinase activity"/>
    <property type="evidence" value="ECO:0007669"/>
    <property type="project" value="RHEA"/>
</dbReference>
<dbReference type="GO" id="GO:0006974">
    <property type="term" value="P:DNA damage response"/>
    <property type="evidence" value="ECO:0007669"/>
    <property type="project" value="EnsemblFungi"/>
</dbReference>
<dbReference type="GO" id="GO:0000082">
    <property type="term" value="P:G1/S transition of mitotic cell cycle"/>
    <property type="evidence" value="ECO:0007669"/>
    <property type="project" value="EnsemblFungi"/>
</dbReference>
<dbReference type="GO" id="GO:0055088">
    <property type="term" value="P:lipid homeostasis"/>
    <property type="evidence" value="ECO:0007669"/>
    <property type="project" value="EnsemblFungi"/>
</dbReference>
<dbReference type="GO" id="GO:0050849">
    <property type="term" value="P:negative regulation of calcium-mediated signaling"/>
    <property type="evidence" value="ECO:0007669"/>
    <property type="project" value="EnsemblFungi"/>
</dbReference>
<dbReference type="GO" id="GO:0045719">
    <property type="term" value="P:negative regulation of glycogen biosynthetic process"/>
    <property type="evidence" value="ECO:0007669"/>
    <property type="project" value="EnsemblFungi"/>
</dbReference>
<dbReference type="GO" id="GO:0016242">
    <property type="term" value="P:negative regulation of macroautophagy"/>
    <property type="evidence" value="ECO:0007669"/>
    <property type="project" value="EnsemblFungi"/>
</dbReference>
<dbReference type="GO" id="GO:0045936">
    <property type="term" value="P:negative regulation of phosphate metabolic process"/>
    <property type="evidence" value="ECO:0007669"/>
    <property type="project" value="EnsemblFungi"/>
</dbReference>
<dbReference type="GO" id="GO:0000122">
    <property type="term" value="P:negative regulation of transcription by RNA polymerase II"/>
    <property type="evidence" value="ECO:0007669"/>
    <property type="project" value="EnsemblFungi"/>
</dbReference>
<dbReference type="GO" id="GO:0016239">
    <property type="term" value="P:positive regulation of macroautophagy"/>
    <property type="evidence" value="ECO:0007669"/>
    <property type="project" value="EnsemblFungi"/>
</dbReference>
<dbReference type="GO" id="GO:0071073">
    <property type="term" value="P:positive regulation of phospholipid biosynthetic process"/>
    <property type="evidence" value="ECO:0007669"/>
    <property type="project" value="EnsemblFungi"/>
</dbReference>
<dbReference type="GO" id="GO:0031648">
    <property type="term" value="P:protein destabilization"/>
    <property type="evidence" value="ECO:0007669"/>
    <property type="project" value="EnsemblFungi"/>
</dbReference>
<dbReference type="GO" id="GO:1901987">
    <property type="term" value="P:regulation of cell cycle phase transition"/>
    <property type="evidence" value="ECO:0007669"/>
    <property type="project" value="EnsemblFungi"/>
</dbReference>
<dbReference type="GO" id="GO:0051302">
    <property type="term" value="P:regulation of cell division"/>
    <property type="evidence" value="ECO:0007669"/>
    <property type="project" value="EnsemblFungi"/>
</dbReference>
<dbReference type="GO" id="GO:0032878">
    <property type="term" value="P:regulation of establishment or maintenance of cell polarity"/>
    <property type="evidence" value="ECO:0007669"/>
    <property type="project" value="EnsemblFungi"/>
</dbReference>
<dbReference type="GO" id="GO:0046822">
    <property type="term" value="P:regulation of nucleocytoplasmic transport"/>
    <property type="evidence" value="ECO:0007669"/>
    <property type="project" value="EnsemblFungi"/>
</dbReference>
<dbReference type="GO" id="GO:0032880">
    <property type="term" value="P:regulation of protein localization"/>
    <property type="evidence" value="ECO:0007669"/>
    <property type="project" value="EnsemblFungi"/>
</dbReference>
<dbReference type="FunFam" id="1.10.510.10:FF:000524">
    <property type="entry name" value="Cell division protein kinase 2"/>
    <property type="match status" value="1"/>
</dbReference>
<dbReference type="FunFam" id="3.30.200.20:FF:000062">
    <property type="entry name" value="PHO system negative regulator"/>
    <property type="match status" value="1"/>
</dbReference>
<dbReference type="Gene3D" id="3.30.200.20">
    <property type="entry name" value="Phosphorylase Kinase, domain 1"/>
    <property type="match status" value="1"/>
</dbReference>
<dbReference type="Gene3D" id="1.10.510.10">
    <property type="entry name" value="Transferase(Phosphotransferase) domain 1"/>
    <property type="match status" value="1"/>
</dbReference>
<dbReference type="InterPro" id="IPR050108">
    <property type="entry name" value="CDK"/>
</dbReference>
<dbReference type="InterPro" id="IPR011009">
    <property type="entry name" value="Kinase-like_dom_sf"/>
</dbReference>
<dbReference type="InterPro" id="IPR000719">
    <property type="entry name" value="Prot_kinase_dom"/>
</dbReference>
<dbReference type="InterPro" id="IPR017441">
    <property type="entry name" value="Protein_kinase_ATP_BS"/>
</dbReference>
<dbReference type="InterPro" id="IPR008271">
    <property type="entry name" value="Ser/Thr_kinase_AS"/>
</dbReference>
<dbReference type="PANTHER" id="PTHR24056">
    <property type="entry name" value="CELL DIVISION PROTEIN KINASE"/>
    <property type="match status" value="1"/>
</dbReference>
<dbReference type="PANTHER" id="PTHR24056:SF46">
    <property type="entry name" value="CYCLIN-DEPENDENT KINASE 5"/>
    <property type="match status" value="1"/>
</dbReference>
<dbReference type="Pfam" id="PF00069">
    <property type="entry name" value="Pkinase"/>
    <property type="match status" value="1"/>
</dbReference>
<dbReference type="SMART" id="SM00220">
    <property type="entry name" value="S_TKc"/>
    <property type="match status" value="1"/>
</dbReference>
<dbReference type="SUPFAM" id="SSF56112">
    <property type="entry name" value="Protein kinase-like (PK-like)"/>
    <property type="match status" value="1"/>
</dbReference>
<dbReference type="PROSITE" id="PS00107">
    <property type="entry name" value="PROTEIN_KINASE_ATP"/>
    <property type="match status" value="1"/>
</dbReference>
<dbReference type="PROSITE" id="PS50011">
    <property type="entry name" value="PROTEIN_KINASE_DOM"/>
    <property type="match status" value="1"/>
</dbReference>
<dbReference type="PROSITE" id="PS00108">
    <property type="entry name" value="PROTEIN_KINASE_ST"/>
    <property type="match status" value="1"/>
</dbReference>
<gene>
    <name type="primary">PHO85</name>
    <name type="ordered locus">CAGL0L12474g</name>
</gene>
<proteinExistence type="inferred from homology"/>
<keyword id="KW-0067">ATP-binding</keyword>
<keyword id="KW-0418">Kinase</keyword>
<keyword id="KW-0547">Nucleotide-binding</keyword>
<keyword id="KW-1185">Reference proteome</keyword>
<keyword id="KW-0723">Serine/threonine-protein kinase</keyword>
<keyword id="KW-0808">Transferase</keyword>
<reference key="1">
    <citation type="journal article" date="2004" name="Nature">
        <title>Genome evolution in yeasts.</title>
        <authorList>
            <person name="Dujon B."/>
            <person name="Sherman D."/>
            <person name="Fischer G."/>
            <person name="Durrens P."/>
            <person name="Casaregola S."/>
            <person name="Lafontaine I."/>
            <person name="de Montigny J."/>
            <person name="Marck C."/>
            <person name="Neuveglise C."/>
            <person name="Talla E."/>
            <person name="Goffard N."/>
            <person name="Frangeul L."/>
            <person name="Aigle M."/>
            <person name="Anthouard V."/>
            <person name="Babour A."/>
            <person name="Barbe V."/>
            <person name="Barnay S."/>
            <person name="Blanchin S."/>
            <person name="Beckerich J.-M."/>
            <person name="Beyne E."/>
            <person name="Bleykasten C."/>
            <person name="Boisrame A."/>
            <person name="Boyer J."/>
            <person name="Cattolico L."/>
            <person name="Confanioleri F."/>
            <person name="de Daruvar A."/>
            <person name="Despons L."/>
            <person name="Fabre E."/>
            <person name="Fairhead C."/>
            <person name="Ferry-Dumazet H."/>
            <person name="Groppi A."/>
            <person name="Hantraye F."/>
            <person name="Hennequin C."/>
            <person name="Jauniaux N."/>
            <person name="Joyet P."/>
            <person name="Kachouri R."/>
            <person name="Kerrest A."/>
            <person name="Koszul R."/>
            <person name="Lemaire M."/>
            <person name="Lesur I."/>
            <person name="Ma L."/>
            <person name="Muller H."/>
            <person name="Nicaud J.-M."/>
            <person name="Nikolski M."/>
            <person name="Oztas S."/>
            <person name="Ozier-Kalogeropoulos O."/>
            <person name="Pellenz S."/>
            <person name="Potier S."/>
            <person name="Richard G.-F."/>
            <person name="Straub M.-L."/>
            <person name="Suleau A."/>
            <person name="Swennen D."/>
            <person name="Tekaia F."/>
            <person name="Wesolowski-Louvel M."/>
            <person name="Westhof E."/>
            <person name="Wirth B."/>
            <person name="Zeniou-Meyer M."/>
            <person name="Zivanovic Y."/>
            <person name="Bolotin-Fukuhara M."/>
            <person name="Thierry A."/>
            <person name="Bouchier C."/>
            <person name="Caudron B."/>
            <person name="Scarpelli C."/>
            <person name="Gaillardin C."/>
            <person name="Weissenbach J."/>
            <person name="Wincker P."/>
            <person name="Souciet J.-L."/>
        </authorList>
    </citation>
    <scope>NUCLEOTIDE SEQUENCE [LARGE SCALE GENOMIC DNA]</scope>
    <source>
        <strain>ATCC 2001 / BCRC 20586 / JCM 3761 / NBRC 0622 / NRRL Y-65 / CBS 138</strain>
    </source>
</reference>
<name>PHO85_CANGA</name>
<accession>Q6FKD4</accession>
<protein>
    <recommendedName>
        <fullName>Negative regulator of the PHO system</fullName>
        <ecNumber>2.7.11.22</ecNumber>
    </recommendedName>
    <alternativeName>
        <fullName>Serine/threonine-protein kinase PHO85</fullName>
    </alternativeName>
</protein>